<sequence>MRKVAIYGKGGIGKSTTTQNTVAGLAEMGKKVMVVGCDPKADSTRLLLGGLQQKTVLDTLREEGEEVELEDIIKEGYRNTRCTESGGPEPGVGCAGRGIITSVNLLEQLGAYDEEWDLDYVFYDVLGDVVCGGFAMPIRDGKAEEIYIVCSGEMMAMYAANNICKGILKYADAGGVRLGGLICNSRKVDNEREMIEELARKIGTQMIHFVPRDNFVQRAEINRKTVIDYDPTHGQADEYRALARKIDENEMFVIPKPLEIEELESLLIEFGIAN</sequence>
<name>NIFH_CHLL3</name>
<proteinExistence type="inferred from homology"/>
<organism>
    <name type="scientific">Chlorobium luteolum (strain DSM 273 / BCRC 81028 / 2530)</name>
    <name type="common">Pelodictyon luteolum</name>
    <dbReference type="NCBI Taxonomy" id="319225"/>
    <lineage>
        <taxon>Bacteria</taxon>
        <taxon>Pseudomonadati</taxon>
        <taxon>Chlorobiota</taxon>
        <taxon>Chlorobiia</taxon>
        <taxon>Chlorobiales</taxon>
        <taxon>Chlorobiaceae</taxon>
        <taxon>Chlorobium/Pelodictyon group</taxon>
        <taxon>Pelodictyon</taxon>
    </lineage>
</organism>
<keyword id="KW-0004">4Fe-4S</keyword>
<keyword id="KW-0013">ADP-ribosylation</keyword>
<keyword id="KW-0067">ATP-binding</keyword>
<keyword id="KW-0408">Iron</keyword>
<keyword id="KW-0411">Iron-sulfur</keyword>
<keyword id="KW-0479">Metal-binding</keyword>
<keyword id="KW-0535">Nitrogen fixation</keyword>
<keyword id="KW-0547">Nucleotide-binding</keyword>
<keyword id="KW-0560">Oxidoreductase</keyword>
<keyword id="KW-1185">Reference proteome</keyword>
<dbReference type="EC" id="1.18.6.1" evidence="1"/>
<dbReference type="EMBL" id="CP000096">
    <property type="protein sequence ID" value="ABB24385.1"/>
    <property type="molecule type" value="Genomic_DNA"/>
</dbReference>
<dbReference type="RefSeq" id="WP_011358257.1">
    <property type="nucleotide sequence ID" value="NC_007512.1"/>
</dbReference>
<dbReference type="SMR" id="Q3B2P6"/>
<dbReference type="STRING" id="319225.Plut_1528"/>
<dbReference type="KEGG" id="plt:Plut_1528"/>
<dbReference type="eggNOG" id="COG1348">
    <property type="taxonomic scope" value="Bacteria"/>
</dbReference>
<dbReference type="HOGENOM" id="CLU_059373_0_0_10"/>
<dbReference type="OrthoDB" id="9778641at2"/>
<dbReference type="Proteomes" id="UP000002709">
    <property type="component" value="Chromosome"/>
</dbReference>
<dbReference type="GO" id="GO:0051539">
    <property type="term" value="F:4 iron, 4 sulfur cluster binding"/>
    <property type="evidence" value="ECO:0007669"/>
    <property type="project" value="UniProtKB-KW"/>
</dbReference>
<dbReference type="GO" id="GO:0005524">
    <property type="term" value="F:ATP binding"/>
    <property type="evidence" value="ECO:0007669"/>
    <property type="project" value="UniProtKB-UniRule"/>
</dbReference>
<dbReference type="GO" id="GO:0046872">
    <property type="term" value="F:metal ion binding"/>
    <property type="evidence" value="ECO:0007669"/>
    <property type="project" value="UniProtKB-KW"/>
</dbReference>
<dbReference type="GO" id="GO:0016163">
    <property type="term" value="F:nitrogenase activity"/>
    <property type="evidence" value="ECO:0007669"/>
    <property type="project" value="UniProtKB-UniRule"/>
</dbReference>
<dbReference type="GO" id="GO:0009399">
    <property type="term" value="P:nitrogen fixation"/>
    <property type="evidence" value="ECO:0007669"/>
    <property type="project" value="UniProtKB-UniRule"/>
</dbReference>
<dbReference type="CDD" id="cd02040">
    <property type="entry name" value="NifH"/>
    <property type="match status" value="1"/>
</dbReference>
<dbReference type="Gene3D" id="3.40.50.300">
    <property type="entry name" value="P-loop containing nucleotide triphosphate hydrolases"/>
    <property type="match status" value="1"/>
</dbReference>
<dbReference type="HAMAP" id="MF_00533">
    <property type="entry name" value="NifH"/>
    <property type="match status" value="1"/>
</dbReference>
<dbReference type="InterPro" id="IPR030655">
    <property type="entry name" value="NifH/chlL_CS"/>
</dbReference>
<dbReference type="InterPro" id="IPR000392">
    <property type="entry name" value="NifH/frxC"/>
</dbReference>
<dbReference type="InterPro" id="IPR005977">
    <property type="entry name" value="Nitrogenase_Fe_NifH"/>
</dbReference>
<dbReference type="InterPro" id="IPR027417">
    <property type="entry name" value="P-loop_NTPase"/>
</dbReference>
<dbReference type="NCBIfam" id="TIGR01287">
    <property type="entry name" value="nifH"/>
    <property type="match status" value="1"/>
</dbReference>
<dbReference type="PANTHER" id="PTHR42864">
    <property type="entry name" value="LIGHT-INDEPENDENT PROTOCHLOROPHYLLIDE REDUCTASE IRON-SULFUR ATP-BINDING PROTEIN"/>
    <property type="match status" value="1"/>
</dbReference>
<dbReference type="PANTHER" id="PTHR42864:SF2">
    <property type="entry name" value="LIGHT-INDEPENDENT PROTOCHLOROPHYLLIDE REDUCTASE IRON-SULFUR ATP-BINDING PROTEIN"/>
    <property type="match status" value="1"/>
</dbReference>
<dbReference type="Pfam" id="PF00142">
    <property type="entry name" value="Fer4_NifH"/>
    <property type="match status" value="1"/>
</dbReference>
<dbReference type="PIRSF" id="PIRSF000363">
    <property type="entry name" value="Nitrogenase_iron"/>
    <property type="match status" value="1"/>
</dbReference>
<dbReference type="PRINTS" id="PR00091">
    <property type="entry name" value="NITROGNASEII"/>
</dbReference>
<dbReference type="SUPFAM" id="SSF52540">
    <property type="entry name" value="P-loop containing nucleoside triphosphate hydrolases"/>
    <property type="match status" value="1"/>
</dbReference>
<dbReference type="PROSITE" id="PS00746">
    <property type="entry name" value="NIFH_FRXC_1"/>
    <property type="match status" value="1"/>
</dbReference>
<dbReference type="PROSITE" id="PS00692">
    <property type="entry name" value="NIFH_FRXC_2"/>
    <property type="match status" value="1"/>
</dbReference>
<dbReference type="PROSITE" id="PS51026">
    <property type="entry name" value="NIFH_FRXC_3"/>
    <property type="match status" value="1"/>
</dbReference>
<gene>
    <name evidence="1" type="primary">nifH</name>
    <name type="ordered locus">Plut_1528</name>
</gene>
<comment type="function">
    <text evidence="1">The key enzymatic reactions in nitrogen fixation are catalyzed by the nitrogenase complex, which has 2 components: the iron protein and the molybdenum-iron protein.</text>
</comment>
<comment type="catalytic activity">
    <reaction evidence="1">
        <text>N2 + 8 reduced [2Fe-2S]-[ferredoxin] + 16 ATP + 16 H2O = H2 + 8 oxidized [2Fe-2S]-[ferredoxin] + 2 NH4(+) + 16 ADP + 16 phosphate + 6 H(+)</text>
        <dbReference type="Rhea" id="RHEA:21448"/>
        <dbReference type="Rhea" id="RHEA-COMP:10000"/>
        <dbReference type="Rhea" id="RHEA-COMP:10001"/>
        <dbReference type="ChEBI" id="CHEBI:15377"/>
        <dbReference type="ChEBI" id="CHEBI:15378"/>
        <dbReference type="ChEBI" id="CHEBI:17997"/>
        <dbReference type="ChEBI" id="CHEBI:18276"/>
        <dbReference type="ChEBI" id="CHEBI:28938"/>
        <dbReference type="ChEBI" id="CHEBI:30616"/>
        <dbReference type="ChEBI" id="CHEBI:33737"/>
        <dbReference type="ChEBI" id="CHEBI:33738"/>
        <dbReference type="ChEBI" id="CHEBI:43474"/>
        <dbReference type="ChEBI" id="CHEBI:456216"/>
        <dbReference type="EC" id="1.18.6.1"/>
    </reaction>
</comment>
<comment type="cofactor">
    <cofactor evidence="1">
        <name>[4Fe-4S] cluster</name>
        <dbReference type="ChEBI" id="CHEBI:49883"/>
    </cofactor>
    <text evidence="1">Binds 1 [4Fe-4S] cluster per dimer.</text>
</comment>
<comment type="subunit">
    <text evidence="1">Homodimer.</text>
</comment>
<comment type="PTM">
    <text evidence="1">The reversible ADP-ribosylation of Arg-97 inactivates the nitrogenase reductase and regulates nitrogenase activity.</text>
</comment>
<comment type="similarity">
    <text evidence="1">Belongs to the NifH/BchL/ChlL family.</text>
</comment>
<accession>Q3B2P6</accession>
<protein>
    <recommendedName>
        <fullName evidence="1">Nitrogenase iron protein</fullName>
        <ecNumber evidence="1">1.18.6.1</ecNumber>
    </recommendedName>
    <alternativeName>
        <fullName evidence="1">Nitrogenase Fe protein</fullName>
    </alternativeName>
    <alternativeName>
        <fullName evidence="1">Nitrogenase component II</fullName>
    </alternativeName>
    <alternativeName>
        <fullName evidence="1">Nitrogenase reductase</fullName>
    </alternativeName>
</protein>
<feature type="chain" id="PRO_1000211878" description="Nitrogenase iron protein">
    <location>
        <begin position="1"/>
        <end position="274"/>
    </location>
</feature>
<feature type="binding site" evidence="1">
    <location>
        <begin position="8"/>
        <end position="15"/>
    </location>
    <ligand>
        <name>ATP</name>
        <dbReference type="ChEBI" id="CHEBI:30616"/>
    </ligand>
</feature>
<feature type="binding site" evidence="1">
    <location>
        <position position="94"/>
    </location>
    <ligand>
        <name>[4Fe-4S] cluster</name>
        <dbReference type="ChEBI" id="CHEBI:49883"/>
        <note>ligand shared between dimeric partners</note>
    </ligand>
</feature>
<feature type="binding site" evidence="1">
    <location>
        <position position="131"/>
    </location>
    <ligand>
        <name>[4Fe-4S] cluster</name>
        <dbReference type="ChEBI" id="CHEBI:49883"/>
        <note>ligand shared between dimeric partners</note>
    </ligand>
</feature>
<feature type="modified residue" description="ADP-ribosylarginine; by dinitrogenase reductase ADP-ribosyltransferase" evidence="1">
    <location>
        <position position="97"/>
    </location>
</feature>
<evidence type="ECO:0000255" key="1">
    <source>
        <dbReference type="HAMAP-Rule" id="MF_00533"/>
    </source>
</evidence>
<reference key="1">
    <citation type="submission" date="2005-08" db="EMBL/GenBank/DDBJ databases">
        <title>Complete sequence of Pelodictyon luteolum DSM 273.</title>
        <authorList>
            <consortium name="US DOE Joint Genome Institute"/>
            <person name="Copeland A."/>
            <person name="Lucas S."/>
            <person name="Lapidus A."/>
            <person name="Barry K."/>
            <person name="Detter J.C."/>
            <person name="Glavina T."/>
            <person name="Hammon N."/>
            <person name="Israni S."/>
            <person name="Pitluck S."/>
            <person name="Bryant D."/>
            <person name="Schmutz J."/>
            <person name="Larimer F."/>
            <person name="Land M."/>
            <person name="Kyrpides N."/>
            <person name="Ivanova N."/>
            <person name="Richardson P."/>
        </authorList>
    </citation>
    <scope>NUCLEOTIDE SEQUENCE [LARGE SCALE GENOMIC DNA]</scope>
    <source>
        <strain>DSM 273 / BCRC 81028 / 2530</strain>
    </source>
</reference>